<comment type="similarity">
    <text evidence="1">Belongs to the UPF0441 family.</text>
</comment>
<comment type="sequence caution" evidence="3">
    <conflict type="erroneous initiation">
        <sequence resource="EMBL-CDS" id="AAM87065"/>
    </conflict>
</comment>
<comment type="sequence caution" evidence="3">
    <conflict type="erroneous initiation">
        <sequence resource="EMBL-CDS" id="AAS63155"/>
    </conflict>
</comment>
<comment type="sequence caution" evidence="3">
    <conflict type="erroneous initiation">
        <sequence resource="EMBL-CDS" id="CAL19338"/>
    </conflict>
</comment>
<accession>Q7CGH1</accession>
<accession>Q74RP7</accession>
<name>Y661_YERPE</name>
<keyword id="KW-1185">Reference proteome</keyword>
<feature type="chain" id="PRO_0000293648" description="UPF0441 protein YPO0661/y3517/YP_2976">
    <location>
        <begin position="1"/>
        <end position="227"/>
    </location>
</feature>
<feature type="region of interest" description="Disordered" evidence="2">
    <location>
        <begin position="198"/>
        <end position="227"/>
    </location>
</feature>
<feature type="compositionally biased region" description="Low complexity" evidence="2">
    <location>
        <begin position="212"/>
        <end position="227"/>
    </location>
</feature>
<evidence type="ECO:0000255" key="1">
    <source>
        <dbReference type="HAMAP-Rule" id="MF_01188"/>
    </source>
</evidence>
<evidence type="ECO:0000256" key="2">
    <source>
        <dbReference type="SAM" id="MobiDB-lite"/>
    </source>
</evidence>
<evidence type="ECO:0000305" key="3"/>
<gene>
    <name type="ordered locus">YPO0661</name>
    <name type="ordered locus">y3517</name>
    <name type="ordered locus">YP_2976</name>
</gene>
<protein>
    <recommendedName>
        <fullName evidence="1">UPF0441 protein YPO0661/y3517/YP_2976</fullName>
    </recommendedName>
</protein>
<proteinExistence type="inferred from homology"/>
<reference key="1">
    <citation type="journal article" date="2002" name="J. Bacteriol.">
        <title>Genome sequence of Yersinia pestis KIM.</title>
        <authorList>
            <person name="Deng W."/>
            <person name="Burland V."/>
            <person name="Plunkett G. III"/>
            <person name="Boutin A."/>
            <person name="Mayhew G.F."/>
            <person name="Liss P."/>
            <person name="Perna N.T."/>
            <person name="Rose D.J."/>
            <person name="Mau B."/>
            <person name="Zhou S."/>
            <person name="Schwartz D.C."/>
            <person name="Fetherston J.D."/>
            <person name="Lindler L.E."/>
            <person name="Brubaker R.R."/>
            <person name="Plano G.V."/>
            <person name="Straley S.C."/>
            <person name="McDonough K.A."/>
            <person name="Nilles M.L."/>
            <person name="Matson J.S."/>
            <person name="Blattner F.R."/>
            <person name="Perry R.D."/>
        </authorList>
    </citation>
    <scope>NUCLEOTIDE SEQUENCE [LARGE SCALE GENOMIC DNA]</scope>
    <source>
        <strain>KIM10+ / Biovar Mediaevalis</strain>
    </source>
</reference>
<reference key="2">
    <citation type="journal article" date="2001" name="Nature">
        <title>Genome sequence of Yersinia pestis, the causative agent of plague.</title>
        <authorList>
            <person name="Parkhill J."/>
            <person name="Wren B.W."/>
            <person name="Thomson N.R."/>
            <person name="Titball R.W."/>
            <person name="Holden M.T.G."/>
            <person name="Prentice M.B."/>
            <person name="Sebaihia M."/>
            <person name="James K.D."/>
            <person name="Churcher C.M."/>
            <person name="Mungall K.L."/>
            <person name="Baker S."/>
            <person name="Basham D."/>
            <person name="Bentley S.D."/>
            <person name="Brooks K."/>
            <person name="Cerdeno-Tarraga A.-M."/>
            <person name="Chillingworth T."/>
            <person name="Cronin A."/>
            <person name="Davies R.M."/>
            <person name="Davis P."/>
            <person name="Dougan G."/>
            <person name="Feltwell T."/>
            <person name="Hamlin N."/>
            <person name="Holroyd S."/>
            <person name="Jagels K."/>
            <person name="Karlyshev A.V."/>
            <person name="Leather S."/>
            <person name="Moule S."/>
            <person name="Oyston P.C.F."/>
            <person name="Quail M.A."/>
            <person name="Rutherford K.M."/>
            <person name="Simmonds M."/>
            <person name="Skelton J."/>
            <person name="Stevens K."/>
            <person name="Whitehead S."/>
            <person name="Barrell B.G."/>
        </authorList>
    </citation>
    <scope>NUCLEOTIDE SEQUENCE [LARGE SCALE GENOMIC DNA]</scope>
    <source>
        <strain>CO-92 / Biovar Orientalis</strain>
    </source>
</reference>
<reference key="3">
    <citation type="journal article" date="2004" name="DNA Res.">
        <title>Complete genome sequence of Yersinia pestis strain 91001, an isolate avirulent to humans.</title>
        <authorList>
            <person name="Song Y."/>
            <person name="Tong Z."/>
            <person name="Wang J."/>
            <person name="Wang L."/>
            <person name="Guo Z."/>
            <person name="Han Y."/>
            <person name="Zhang J."/>
            <person name="Pei D."/>
            <person name="Zhou D."/>
            <person name="Qin H."/>
            <person name="Pang X."/>
            <person name="Han Y."/>
            <person name="Zhai J."/>
            <person name="Li M."/>
            <person name="Cui B."/>
            <person name="Qi Z."/>
            <person name="Jin L."/>
            <person name="Dai R."/>
            <person name="Chen F."/>
            <person name="Li S."/>
            <person name="Ye C."/>
            <person name="Du Z."/>
            <person name="Lin W."/>
            <person name="Wang J."/>
            <person name="Yu J."/>
            <person name="Yang H."/>
            <person name="Wang J."/>
            <person name="Huang P."/>
            <person name="Yang R."/>
        </authorList>
    </citation>
    <scope>NUCLEOTIDE SEQUENCE [LARGE SCALE GENOMIC DNA]</scope>
    <source>
        <strain>91001 / Biovar Mediaevalis</strain>
    </source>
</reference>
<dbReference type="EMBL" id="AE009952">
    <property type="protein sequence ID" value="AAM87065.1"/>
    <property type="status" value="ALT_INIT"/>
    <property type="molecule type" value="Genomic_DNA"/>
</dbReference>
<dbReference type="EMBL" id="AE017042">
    <property type="protein sequence ID" value="AAS63155.1"/>
    <property type="status" value="ALT_INIT"/>
    <property type="molecule type" value="Genomic_DNA"/>
</dbReference>
<dbReference type="EMBL" id="AL590842">
    <property type="protein sequence ID" value="CAL19338.1"/>
    <property type="status" value="ALT_INIT"/>
    <property type="molecule type" value="Genomic_DNA"/>
</dbReference>
<dbReference type="PIR" id="AH0081">
    <property type="entry name" value="AH0081"/>
</dbReference>
<dbReference type="RefSeq" id="WP_002357252.1">
    <property type="nucleotide sequence ID" value="NZ_WUCM01000053.1"/>
</dbReference>
<dbReference type="RefSeq" id="YP_002345729.1">
    <property type="nucleotide sequence ID" value="NC_003143.1"/>
</dbReference>
<dbReference type="SMR" id="Q7CGH1"/>
<dbReference type="IntAct" id="Q7CGH1">
    <property type="interactions" value="1"/>
</dbReference>
<dbReference type="STRING" id="214092.YPO0661"/>
<dbReference type="PaxDb" id="214092-YPO0661"/>
<dbReference type="DNASU" id="1148464"/>
<dbReference type="EnsemblBacteria" id="AAS63155">
    <property type="protein sequence ID" value="AAS63155"/>
    <property type="gene ID" value="YP_2976"/>
</dbReference>
<dbReference type="KEGG" id="ype:YPO0661"/>
<dbReference type="KEGG" id="ypk:y3517"/>
<dbReference type="KEGG" id="ypm:YP_2976"/>
<dbReference type="PATRIC" id="fig|214092.21.peg.922"/>
<dbReference type="eggNOG" id="COG5463">
    <property type="taxonomic scope" value="Bacteria"/>
</dbReference>
<dbReference type="HOGENOM" id="CLU_095624_0_0_6"/>
<dbReference type="OMA" id="NRYYSQP"/>
<dbReference type="Proteomes" id="UP000000815">
    <property type="component" value="Chromosome"/>
</dbReference>
<dbReference type="Proteomes" id="UP000001019">
    <property type="component" value="Chromosome"/>
</dbReference>
<dbReference type="Proteomes" id="UP000002490">
    <property type="component" value="Chromosome"/>
</dbReference>
<dbReference type="HAMAP" id="MF_01188">
    <property type="entry name" value="UPF0441"/>
    <property type="match status" value="1"/>
</dbReference>
<dbReference type="InterPro" id="IPR009576">
    <property type="entry name" value="Biofilm_formation_YgiB"/>
</dbReference>
<dbReference type="NCBIfam" id="NF008655">
    <property type="entry name" value="PRK11653.1"/>
    <property type="match status" value="1"/>
</dbReference>
<dbReference type="Pfam" id="PF06693">
    <property type="entry name" value="DUF1190"/>
    <property type="match status" value="1"/>
</dbReference>
<sequence length="227" mass="23835">MKRTKNINQETFRKSWRSYRLAPVALAVSAVFMLAGCEKTDETVSLYQNADDCSQANPSQSAECTTAYNTALQEAVKTAPKYATREDCVAEFGESQCTQAPAQAGMVPTSSSETTAAAPQQSGSMWMPLMAGYMMGRMMGGGASQPLFTSKAPNSPANGKFVDASGKNFGAATTGRTMTVPKTALAPKPAVTKTITRGGFGESVAKQSSMQRSAATSSKTTTRSMGG</sequence>
<organism>
    <name type="scientific">Yersinia pestis</name>
    <dbReference type="NCBI Taxonomy" id="632"/>
    <lineage>
        <taxon>Bacteria</taxon>
        <taxon>Pseudomonadati</taxon>
        <taxon>Pseudomonadota</taxon>
        <taxon>Gammaproteobacteria</taxon>
        <taxon>Enterobacterales</taxon>
        <taxon>Yersiniaceae</taxon>
        <taxon>Yersinia</taxon>
    </lineage>
</organism>